<keyword id="KW-0002">3D-structure</keyword>
<keyword id="KW-0963">Cytoplasm</keyword>
<keyword id="KW-0479">Metal-binding</keyword>
<keyword id="KW-1185">Reference proteome</keyword>
<keyword id="KW-0687">Ribonucleoprotein</keyword>
<keyword id="KW-0689">Ribosomal protein</keyword>
<keyword id="KW-0862">Zinc</keyword>
<keyword id="KW-0863">Zinc-finger</keyword>
<name>RL37A_RABIT</name>
<dbReference type="EMBL" id="AAGW02008299">
    <property type="status" value="NOT_ANNOTATED_CDS"/>
    <property type="molecule type" value="Genomic_DNA"/>
</dbReference>
<dbReference type="EMBL" id="AAGW02010234">
    <property type="status" value="NOT_ANNOTATED_CDS"/>
    <property type="molecule type" value="Genomic_DNA"/>
</dbReference>
<dbReference type="EMBL" id="AAGW02042651">
    <property type="status" value="NOT_ANNOTATED_CDS"/>
    <property type="molecule type" value="Genomic_DNA"/>
</dbReference>
<dbReference type="EMBL" id="AAGW02042652">
    <property type="status" value="NOT_ANNOTATED_CDS"/>
    <property type="molecule type" value="Genomic_DNA"/>
</dbReference>
<dbReference type="EMBL" id="AAGW02042653">
    <property type="status" value="NOT_ANNOTATED_CDS"/>
    <property type="molecule type" value="Genomic_DNA"/>
</dbReference>
<dbReference type="EMBL" id="AAGW02042654">
    <property type="status" value="NOT_ANNOTATED_CDS"/>
    <property type="molecule type" value="Genomic_DNA"/>
</dbReference>
<dbReference type="RefSeq" id="XP_002709425.1">
    <property type="nucleotide sequence ID" value="XM_002709379.3"/>
</dbReference>
<dbReference type="RefSeq" id="XP_002712512.1">
    <property type="nucleotide sequence ID" value="XM_002712466.5"/>
</dbReference>
<dbReference type="PDB" id="3JAG">
    <property type="method" value="EM"/>
    <property type="resolution" value="3.65 A"/>
    <property type="chains" value="p=2-92"/>
</dbReference>
<dbReference type="PDB" id="3JAH">
    <property type="method" value="EM"/>
    <property type="resolution" value="3.45 A"/>
    <property type="chains" value="p=2-92"/>
</dbReference>
<dbReference type="PDB" id="3JAI">
    <property type="method" value="EM"/>
    <property type="resolution" value="3.65 A"/>
    <property type="chains" value="p=2-92"/>
</dbReference>
<dbReference type="PDB" id="5LZS">
    <property type="method" value="EM"/>
    <property type="resolution" value="3.31 A"/>
    <property type="chains" value="p=1-92"/>
</dbReference>
<dbReference type="PDB" id="5LZT">
    <property type="method" value="EM"/>
    <property type="resolution" value="3.65 A"/>
    <property type="chains" value="p=1-92"/>
</dbReference>
<dbReference type="PDB" id="5LZU">
    <property type="method" value="EM"/>
    <property type="resolution" value="3.75 A"/>
    <property type="chains" value="p=1-92"/>
</dbReference>
<dbReference type="PDB" id="5LZV">
    <property type="method" value="EM"/>
    <property type="resolution" value="3.35 A"/>
    <property type="chains" value="p=1-92"/>
</dbReference>
<dbReference type="PDB" id="5LZW">
    <property type="method" value="EM"/>
    <property type="resolution" value="3.53 A"/>
    <property type="chains" value="p=1-92"/>
</dbReference>
<dbReference type="PDB" id="5LZX">
    <property type="method" value="EM"/>
    <property type="resolution" value="3.67 A"/>
    <property type="chains" value="p=1-92"/>
</dbReference>
<dbReference type="PDB" id="5LZY">
    <property type="method" value="EM"/>
    <property type="resolution" value="3.99 A"/>
    <property type="chains" value="p=1-92"/>
</dbReference>
<dbReference type="PDB" id="5LZZ">
    <property type="method" value="EM"/>
    <property type="resolution" value="3.47 A"/>
    <property type="chains" value="p=1-92"/>
</dbReference>
<dbReference type="PDB" id="6D90">
    <property type="method" value="EM"/>
    <property type="resolution" value="3.20 A"/>
    <property type="chains" value="p=1-92"/>
</dbReference>
<dbReference type="PDB" id="6D9J">
    <property type="method" value="EM"/>
    <property type="resolution" value="3.20 A"/>
    <property type="chains" value="p=1-92"/>
</dbReference>
<dbReference type="PDB" id="6FTG">
    <property type="method" value="EM"/>
    <property type="resolution" value="9.10 A"/>
    <property type="chains" value="p=2-92"/>
</dbReference>
<dbReference type="PDB" id="6FTI">
    <property type="method" value="EM"/>
    <property type="resolution" value="4.20 A"/>
    <property type="chains" value="p=2-92"/>
</dbReference>
<dbReference type="PDB" id="6FTJ">
    <property type="method" value="EM"/>
    <property type="resolution" value="4.70 A"/>
    <property type="chains" value="p=2-92"/>
</dbReference>
<dbReference type="PDB" id="6GZ3">
    <property type="method" value="EM"/>
    <property type="resolution" value="3.60 A"/>
    <property type="chains" value="Ap=2-92"/>
</dbReference>
<dbReference type="PDB" id="6HCF">
    <property type="method" value="EM"/>
    <property type="resolution" value="3.90 A"/>
    <property type="chains" value="p3=1-92"/>
</dbReference>
<dbReference type="PDB" id="6HCJ">
    <property type="method" value="EM"/>
    <property type="resolution" value="3.80 A"/>
    <property type="chains" value="p3=1-92"/>
</dbReference>
<dbReference type="PDB" id="6HCM">
    <property type="method" value="EM"/>
    <property type="resolution" value="6.80 A"/>
    <property type="chains" value="p3=1-92"/>
</dbReference>
<dbReference type="PDB" id="6HCQ">
    <property type="method" value="EM"/>
    <property type="resolution" value="6.50 A"/>
    <property type="chains" value="p3=1-92"/>
</dbReference>
<dbReference type="PDB" id="6MTB">
    <property type="method" value="EM"/>
    <property type="resolution" value="3.60 A"/>
    <property type="chains" value="p=2-92"/>
</dbReference>
<dbReference type="PDB" id="6MTC">
    <property type="method" value="EM"/>
    <property type="resolution" value="3.40 A"/>
    <property type="chains" value="p=2-92"/>
</dbReference>
<dbReference type="PDB" id="6MTD">
    <property type="method" value="EM"/>
    <property type="resolution" value="3.30 A"/>
    <property type="chains" value="p=2-92"/>
</dbReference>
<dbReference type="PDB" id="6MTE">
    <property type="method" value="EM"/>
    <property type="resolution" value="3.40 A"/>
    <property type="chains" value="p=2-92"/>
</dbReference>
<dbReference type="PDB" id="6P5I">
    <property type="method" value="EM"/>
    <property type="resolution" value="3.10 A"/>
    <property type="chains" value="Ap=1-92"/>
</dbReference>
<dbReference type="PDB" id="6P5J">
    <property type="method" value="EM"/>
    <property type="resolution" value="3.10 A"/>
    <property type="chains" value="Ap=1-92"/>
</dbReference>
<dbReference type="PDB" id="6P5K">
    <property type="method" value="EM"/>
    <property type="resolution" value="3.10 A"/>
    <property type="chains" value="Ap=1-92"/>
</dbReference>
<dbReference type="PDB" id="6P5N">
    <property type="method" value="EM"/>
    <property type="resolution" value="3.20 A"/>
    <property type="chains" value="Ap=1-92"/>
</dbReference>
<dbReference type="PDB" id="6R5Q">
    <property type="method" value="EM"/>
    <property type="resolution" value="3.00 A"/>
    <property type="chains" value="p=2-92"/>
</dbReference>
<dbReference type="PDB" id="6R6G">
    <property type="method" value="EM"/>
    <property type="resolution" value="3.70 A"/>
    <property type="chains" value="p=2-92"/>
</dbReference>
<dbReference type="PDB" id="6R6P">
    <property type="method" value="EM"/>
    <property type="resolution" value="3.10 A"/>
    <property type="chains" value="p=2-92"/>
</dbReference>
<dbReference type="PDB" id="6R7Q">
    <property type="method" value="EM"/>
    <property type="resolution" value="3.90 A"/>
    <property type="chains" value="p=2-92"/>
</dbReference>
<dbReference type="PDB" id="6SGC">
    <property type="method" value="EM"/>
    <property type="resolution" value="2.80 A"/>
    <property type="chains" value="p2=1-92"/>
</dbReference>
<dbReference type="PDB" id="6T59">
    <property type="method" value="EM"/>
    <property type="resolution" value="3.11 A"/>
    <property type="chains" value="p3=1-92"/>
</dbReference>
<dbReference type="PDB" id="6ZVK">
    <property type="method" value="EM"/>
    <property type="resolution" value="3.49 A"/>
    <property type="chains" value="I2=2-92"/>
</dbReference>
<dbReference type="PDB" id="7A01">
    <property type="method" value="EM"/>
    <property type="resolution" value="3.60 A"/>
    <property type="chains" value="I2=2-92"/>
</dbReference>
<dbReference type="PDB" id="7MDZ">
    <property type="method" value="EM"/>
    <property type="resolution" value="3.20 A"/>
    <property type="chains" value="p=1-92"/>
</dbReference>
<dbReference type="PDB" id="7NFX">
    <property type="method" value="EM"/>
    <property type="resolution" value="3.20 A"/>
    <property type="chains" value="p=1-92"/>
</dbReference>
<dbReference type="PDB" id="7NWI">
    <property type="method" value="EM"/>
    <property type="resolution" value="3.13 A"/>
    <property type="chains" value="p=2-92"/>
</dbReference>
<dbReference type="PDB" id="7O7Y">
    <property type="method" value="EM"/>
    <property type="resolution" value="2.20 A"/>
    <property type="chains" value="Bp=1-92"/>
</dbReference>
<dbReference type="PDB" id="7O7Z">
    <property type="method" value="EM"/>
    <property type="resolution" value="2.40 A"/>
    <property type="chains" value="Bp=1-92"/>
</dbReference>
<dbReference type="PDB" id="7O80">
    <property type="method" value="EM"/>
    <property type="resolution" value="2.90 A"/>
    <property type="chains" value="Bp=1-92"/>
</dbReference>
<dbReference type="PDB" id="7O81">
    <property type="method" value="EM"/>
    <property type="resolution" value="3.10 A"/>
    <property type="chains" value="Bp=1-92"/>
</dbReference>
<dbReference type="PDB" id="7OBR">
    <property type="method" value="EM"/>
    <property type="resolution" value="2.80 A"/>
    <property type="chains" value="p=1-92"/>
</dbReference>
<dbReference type="PDB" id="7OYD">
    <property type="method" value="EM"/>
    <property type="resolution" value="2.30 A"/>
    <property type="chains" value="p=1-92"/>
</dbReference>
<dbReference type="PDB" id="7QWQ">
    <property type="method" value="EM"/>
    <property type="resolution" value="2.83 A"/>
    <property type="chains" value="p=1-92"/>
</dbReference>
<dbReference type="PDB" id="7QWR">
    <property type="method" value="EM"/>
    <property type="resolution" value="2.90 A"/>
    <property type="chains" value="p=1-92"/>
</dbReference>
<dbReference type="PDB" id="7QWS">
    <property type="method" value="EM"/>
    <property type="resolution" value="3.40 A"/>
    <property type="chains" value="p=1-92"/>
</dbReference>
<dbReference type="PDB" id="7TM3">
    <property type="method" value="EM"/>
    <property type="resolution" value="3.25 A"/>
    <property type="chains" value="p=1-92"/>
</dbReference>
<dbReference type="PDB" id="7TOQ">
    <property type="method" value="EM"/>
    <property type="resolution" value="3.10 A"/>
    <property type="chains" value="AL43=2-92"/>
</dbReference>
<dbReference type="PDB" id="7TOR">
    <property type="method" value="EM"/>
    <property type="resolution" value="2.90 A"/>
    <property type="chains" value="AL43=2-92"/>
</dbReference>
<dbReference type="PDB" id="7TUT">
    <property type="method" value="EM"/>
    <property type="resolution" value="3.88 A"/>
    <property type="chains" value="p=1-92"/>
</dbReference>
<dbReference type="PDB" id="7UCJ">
    <property type="method" value="EM"/>
    <property type="resolution" value="3.10 A"/>
    <property type="chains" value="p=2-92"/>
</dbReference>
<dbReference type="PDB" id="7UCK">
    <property type="method" value="EM"/>
    <property type="resolution" value="2.80 A"/>
    <property type="chains" value="p=2-92"/>
</dbReference>
<dbReference type="PDB" id="8B5L">
    <property type="method" value="EM"/>
    <property type="resolution" value="2.86 A"/>
    <property type="chains" value="p=2-92"/>
</dbReference>
<dbReference type="PDB" id="8B6C">
    <property type="method" value="EM"/>
    <property type="resolution" value="2.79 A"/>
    <property type="chains" value="p=2-92"/>
</dbReference>
<dbReference type="PDB" id="8BHF">
    <property type="method" value="EM"/>
    <property type="resolution" value="3.10 A"/>
    <property type="chains" value="c1=2-92"/>
</dbReference>
<dbReference type="PDB" id="8BPO">
    <property type="method" value="EM"/>
    <property type="resolution" value="2.80 A"/>
    <property type="chains" value="o2=1-92"/>
</dbReference>
<dbReference type="PDB" id="8BTK">
    <property type="method" value="EM"/>
    <property type="resolution" value="3.50 A"/>
    <property type="chains" value="Bp=1-92"/>
</dbReference>
<dbReference type="PDB" id="8P2K">
    <property type="method" value="EM"/>
    <property type="resolution" value="2.90 A"/>
    <property type="chains" value="Bp=1-92"/>
</dbReference>
<dbReference type="PDB" id="8RJB">
    <property type="method" value="EM"/>
    <property type="resolution" value="2.69 A"/>
    <property type="chains" value="p=1-92"/>
</dbReference>
<dbReference type="PDB" id="8RJC">
    <property type="method" value="EM"/>
    <property type="resolution" value="2.90 A"/>
    <property type="chains" value="p=1-92"/>
</dbReference>
<dbReference type="PDB" id="8RJD">
    <property type="method" value="EM"/>
    <property type="resolution" value="2.79 A"/>
    <property type="chains" value="p=1-92"/>
</dbReference>
<dbReference type="PDB" id="8SCB">
    <property type="method" value="EM"/>
    <property type="resolution" value="2.50 A"/>
    <property type="chains" value="p=1-92"/>
</dbReference>
<dbReference type="PDB" id="8VFT">
    <property type="method" value="EM"/>
    <property type="resolution" value="3.30 A"/>
    <property type="chains" value="p=1-92"/>
</dbReference>
<dbReference type="PDB" id="9BDL">
    <property type="method" value="EM"/>
    <property type="resolution" value="2.80 A"/>
    <property type="chains" value="AL43=2-92"/>
</dbReference>
<dbReference type="PDB" id="9BDN">
    <property type="method" value="EM"/>
    <property type="resolution" value="3.10 A"/>
    <property type="chains" value="AL43=2-92"/>
</dbReference>
<dbReference type="PDB" id="9BDP">
    <property type="method" value="EM"/>
    <property type="resolution" value="3.70 A"/>
    <property type="chains" value="AL43=2-92"/>
</dbReference>
<dbReference type="PDB" id="9F1B">
    <property type="method" value="EM"/>
    <property type="resolution" value="3.01 A"/>
    <property type="chains" value="Bp=1-92"/>
</dbReference>
<dbReference type="PDB" id="9F1C">
    <property type="method" value="EM"/>
    <property type="resolution" value="3.78 A"/>
    <property type="chains" value="Bp=1-92"/>
</dbReference>
<dbReference type="PDB" id="9F1D">
    <property type="method" value="EM"/>
    <property type="resolution" value="3.26 A"/>
    <property type="chains" value="Bp=1-92"/>
</dbReference>
<dbReference type="PDBsum" id="3JAG"/>
<dbReference type="PDBsum" id="3JAH"/>
<dbReference type="PDBsum" id="3JAI"/>
<dbReference type="PDBsum" id="5LZS"/>
<dbReference type="PDBsum" id="5LZT"/>
<dbReference type="PDBsum" id="5LZU"/>
<dbReference type="PDBsum" id="5LZV"/>
<dbReference type="PDBsum" id="5LZW"/>
<dbReference type="PDBsum" id="5LZX"/>
<dbReference type="PDBsum" id="5LZY"/>
<dbReference type="PDBsum" id="5LZZ"/>
<dbReference type="PDBsum" id="6D90"/>
<dbReference type="PDBsum" id="6D9J"/>
<dbReference type="PDBsum" id="6FTG"/>
<dbReference type="PDBsum" id="6FTI"/>
<dbReference type="PDBsum" id="6FTJ"/>
<dbReference type="PDBsum" id="6GZ3"/>
<dbReference type="PDBsum" id="6HCF"/>
<dbReference type="PDBsum" id="6HCJ"/>
<dbReference type="PDBsum" id="6HCM"/>
<dbReference type="PDBsum" id="6HCQ"/>
<dbReference type="PDBsum" id="6MTB"/>
<dbReference type="PDBsum" id="6MTC"/>
<dbReference type="PDBsum" id="6MTD"/>
<dbReference type="PDBsum" id="6MTE"/>
<dbReference type="PDBsum" id="6P5I"/>
<dbReference type="PDBsum" id="6P5J"/>
<dbReference type="PDBsum" id="6P5K"/>
<dbReference type="PDBsum" id="6P5N"/>
<dbReference type="PDBsum" id="6R5Q"/>
<dbReference type="PDBsum" id="6R6G"/>
<dbReference type="PDBsum" id="6R6P"/>
<dbReference type="PDBsum" id="6R7Q"/>
<dbReference type="PDBsum" id="6SGC"/>
<dbReference type="PDBsum" id="6T59"/>
<dbReference type="PDBsum" id="6ZVK"/>
<dbReference type="PDBsum" id="7A01"/>
<dbReference type="PDBsum" id="7MDZ"/>
<dbReference type="PDBsum" id="7NFX"/>
<dbReference type="PDBsum" id="7NWI"/>
<dbReference type="PDBsum" id="7O7Y"/>
<dbReference type="PDBsum" id="7O7Z"/>
<dbReference type="PDBsum" id="7O80"/>
<dbReference type="PDBsum" id="7O81"/>
<dbReference type="PDBsum" id="7OBR"/>
<dbReference type="PDBsum" id="7OYD"/>
<dbReference type="PDBsum" id="7QWQ"/>
<dbReference type="PDBsum" id="7QWR"/>
<dbReference type="PDBsum" id="7QWS"/>
<dbReference type="PDBsum" id="7TM3"/>
<dbReference type="PDBsum" id="7TOQ"/>
<dbReference type="PDBsum" id="7TOR"/>
<dbReference type="PDBsum" id="7TUT"/>
<dbReference type="PDBsum" id="7UCJ"/>
<dbReference type="PDBsum" id="7UCK"/>
<dbReference type="PDBsum" id="8B5L"/>
<dbReference type="PDBsum" id="8B6C"/>
<dbReference type="PDBsum" id="8BHF"/>
<dbReference type="PDBsum" id="8BPO"/>
<dbReference type="PDBsum" id="8BTK"/>
<dbReference type="PDBsum" id="8P2K"/>
<dbReference type="PDBsum" id="8RJB"/>
<dbReference type="PDBsum" id="8RJC"/>
<dbReference type="PDBsum" id="8RJD"/>
<dbReference type="PDBsum" id="8SCB"/>
<dbReference type="PDBsum" id="8VFT"/>
<dbReference type="PDBsum" id="9BDL"/>
<dbReference type="PDBsum" id="9BDN"/>
<dbReference type="PDBsum" id="9BDP"/>
<dbReference type="PDBsum" id="9F1B"/>
<dbReference type="PDBsum" id="9F1C"/>
<dbReference type="PDBsum" id="9F1D"/>
<dbReference type="EMDB" id="EMD-0098"/>
<dbReference type="EMDB" id="EMD-0099"/>
<dbReference type="EMDB" id="EMD-0100"/>
<dbReference type="EMDB" id="EMD-0192"/>
<dbReference type="EMDB" id="EMD-0194"/>
<dbReference type="EMDB" id="EMD-0195"/>
<dbReference type="EMDB" id="EMD-0197"/>
<dbReference type="EMDB" id="EMD-10181"/>
<dbReference type="EMDB" id="EMD-10380"/>
<dbReference type="EMDB" id="EMD-11459"/>
<dbReference type="EMDB" id="EMD-11590"/>
<dbReference type="EMDB" id="EMD-12303"/>
<dbReference type="EMDB" id="EMD-12633"/>
<dbReference type="EMDB" id="EMD-12756"/>
<dbReference type="EMDB" id="EMD-12757"/>
<dbReference type="EMDB" id="EMD-12758"/>
<dbReference type="EMDB" id="EMD-12759"/>
<dbReference type="EMDB" id="EMD-12801"/>
<dbReference type="EMDB" id="EMD-13114"/>
<dbReference type="EMDB" id="EMD-14191"/>
<dbReference type="EMDB" id="EMD-14192"/>
<dbReference type="EMDB" id="EMD-14193"/>
<dbReference type="EMDB" id="EMD-15860"/>
<dbReference type="EMDB" id="EMD-15863"/>
<dbReference type="EMDB" id="EMD-16052"/>
<dbReference type="EMDB" id="EMD-16155"/>
<dbReference type="EMDB" id="EMD-16232"/>
<dbReference type="EMDB" id="EMD-17367"/>
<dbReference type="EMDB" id="EMD-19195"/>
<dbReference type="EMDB" id="EMD-19197"/>
<dbReference type="EMDB" id="EMD-19198"/>
<dbReference type="EMDB" id="EMD-20255"/>
<dbReference type="EMDB" id="EMD-20256"/>
<dbReference type="EMDB" id="EMD-20257"/>
<dbReference type="EMDB" id="EMD-20258"/>
<dbReference type="EMDB" id="EMD-23785"/>
<dbReference type="EMDB" id="EMD-25994"/>
<dbReference type="EMDB" id="EMD-26035"/>
<dbReference type="EMDB" id="EMD-26036"/>
<dbReference type="EMDB" id="EMD-26133"/>
<dbReference type="EMDB" id="EMD-26444"/>
<dbReference type="EMDB" id="EMD-26445"/>
<dbReference type="EMDB" id="EMD-40344"/>
<dbReference type="EMDB" id="EMD-4130"/>
<dbReference type="EMDB" id="EMD-4131"/>
<dbReference type="EMDB" id="EMD-4132"/>
<dbReference type="EMDB" id="EMD-4133"/>
<dbReference type="EMDB" id="EMD-4134"/>
<dbReference type="EMDB" id="EMD-4135"/>
<dbReference type="EMDB" id="EMD-4136"/>
<dbReference type="EMDB" id="EMD-4137"/>
<dbReference type="EMDB" id="EMD-4300"/>
<dbReference type="EMDB" id="EMD-4315"/>
<dbReference type="EMDB" id="EMD-4316"/>
<dbReference type="EMDB" id="EMD-4317"/>
<dbReference type="EMDB" id="EMD-43189"/>
<dbReference type="EMDB" id="EMD-44461"/>
<dbReference type="EMDB" id="EMD-44463"/>
<dbReference type="EMDB" id="EMD-44464"/>
<dbReference type="EMDB" id="EMD-4729"/>
<dbReference type="EMDB" id="EMD-4735"/>
<dbReference type="EMDB" id="EMD-4737"/>
<dbReference type="EMDB" id="EMD-4745"/>
<dbReference type="EMDB" id="EMD-50124"/>
<dbReference type="EMDB" id="EMD-50125"/>
<dbReference type="EMDB" id="EMD-50126"/>
<dbReference type="EMDB" id="EMD-7834"/>
<dbReference type="EMDB" id="EMD-7836"/>
<dbReference type="EMDB" id="EMD-9237"/>
<dbReference type="EMDB" id="EMD-9239"/>
<dbReference type="EMDB" id="EMD-9240"/>
<dbReference type="EMDB" id="EMD-9242"/>
<dbReference type="SMR" id="G1SY53"/>
<dbReference type="FunCoup" id="G1SY53">
    <property type="interactions" value="725"/>
</dbReference>
<dbReference type="IntAct" id="G1SY53">
    <property type="interactions" value="1"/>
</dbReference>
<dbReference type="STRING" id="9986.ENSOCUP00000008528"/>
<dbReference type="PaxDb" id="9986-ENSOCUP00000008528"/>
<dbReference type="Ensembl" id="ENSOCUT00000009904.2">
    <property type="protein sequence ID" value="ENSOCUP00000008528.2"/>
    <property type="gene ID" value="ENSOCUG00000009905.2"/>
</dbReference>
<dbReference type="Ensembl" id="ENSOCUT00000019163.2">
    <property type="protein sequence ID" value="ENSOCUP00000042835.1"/>
    <property type="gene ID" value="ENSOCUG00000019163.2"/>
</dbReference>
<dbReference type="Ensembl" id="ENSOCUT00000051225.1">
    <property type="protein sequence ID" value="ENSOCUP00000046694.1"/>
    <property type="gene ID" value="ENSOCUG00000035553.1"/>
</dbReference>
<dbReference type="Ensembl" id="ENSOCUT00000061049.1">
    <property type="protein sequence ID" value="ENSOCUP00000038651.1"/>
    <property type="gene ID" value="ENSOCUG00000035553.1"/>
</dbReference>
<dbReference type="GeneID" id="100348396"/>
<dbReference type="KEGG" id="ocu:100348396"/>
<dbReference type="KEGG" id="ocu:100349729"/>
<dbReference type="KEGG" id="ocu:100351807"/>
<dbReference type="CTD" id="6168"/>
<dbReference type="eggNOG" id="KOG0402">
    <property type="taxonomic scope" value="Eukaryota"/>
</dbReference>
<dbReference type="GeneTree" id="ENSGT00390000016988"/>
<dbReference type="HOGENOM" id="CLU_141199_1_0_1"/>
<dbReference type="OMA" id="GPRYGRK"/>
<dbReference type="OrthoDB" id="10258345at2759"/>
<dbReference type="TreeFam" id="TF313068"/>
<dbReference type="Proteomes" id="UP000001811">
    <property type="component" value="Chromosome 1"/>
</dbReference>
<dbReference type="Proteomes" id="UP000001811">
    <property type="component" value="Chromosome 2"/>
</dbReference>
<dbReference type="Proteomes" id="UP000001811">
    <property type="component" value="Chromosome 7"/>
</dbReference>
<dbReference type="Bgee" id="ENSOCUG00000009905">
    <property type="expression patterns" value="Expressed in ovary and 12 other cell types or tissues"/>
</dbReference>
<dbReference type="GO" id="GO:0022625">
    <property type="term" value="C:cytosolic large ribosomal subunit"/>
    <property type="evidence" value="ECO:0007669"/>
    <property type="project" value="UniProtKB-ARBA"/>
</dbReference>
<dbReference type="GO" id="GO:0070180">
    <property type="term" value="F:large ribosomal subunit rRNA binding"/>
    <property type="evidence" value="ECO:0007669"/>
    <property type="project" value="TreeGrafter"/>
</dbReference>
<dbReference type="GO" id="GO:0003735">
    <property type="term" value="F:structural constituent of ribosome"/>
    <property type="evidence" value="ECO:0007669"/>
    <property type="project" value="InterPro"/>
</dbReference>
<dbReference type="GO" id="GO:0008270">
    <property type="term" value="F:zinc ion binding"/>
    <property type="evidence" value="ECO:0007669"/>
    <property type="project" value="UniProtKB-KW"/>
</dbReference>
<dbReference type="GO" id="GO:0006412">
    <property type="term" value="P:translation"/>
    <property type="evidence" value="ECO:0007669"/>
    <property type="project" value="InterPro"/>
</dbReference>
<dbReference type="FunFam" id="2.20.25.30:FF:000002">
    <property type="entry name" value="60S ribosomal protein L37a"/>
    <property type="match status" value="1"/>
</dbReference>
<dbReference type="Gene3D" id="2.20.25.30">
    <property type="match status" value="1"/>
</dbReference>
<dbReference type="HAMAP" id="MF_00327">
    <property type="entry name" value="Ribosomal_eL43"/>
    <property type="match status" value="1"/>
</dbReference>
<dbReference type="InterPro" id="IPR011331">
    <property type="entry name" value="Ribosomal_eL37/eL43"/>
</dbReference>
<dbReference type="InterPro" id="IPR002674">
    <property type="entry name" value="Ribosomal_eL43"/>
</dbReference>
<dbReference type="InterPro" id="IPR011332">
    <property type="entry name" value="Ribosomal_zn-bd"/>
</dbReference>
<dbReference type="NCBIfam" id="TIGR00280">
    <property type="entry name" value="eL43_euk_arch"/>
    <property type="match status" value="1"/>
</dbReference>
<dbReference type="NCBIfam" id="NF003058">
    <property type="entry name" value="PRK03976.1"/>
    <property type="match status" value="1"/>
</dbReference>
<dbReference type="PANTHER" id="PTHR48188:SF2">
    <property type="entry name" value="60S RIBOSOMAL PROTEIN L37A"/>
    <property type="match status" value="1"/>
</dbReference>
<dbReference type="PANTHER" id="PTHR48188">
    <property type="entry name" value="60S RIBOSOMAL PROTEIN L43"/>
    <property type="match status" value="1"/>
</dbReference>
<dbReference type="Pfam" id="PF01780">
    <property type="entry name" value="Ribosomal_L37ae"/>
    <property type="match status" value="1"/>
</dbReference>
<dbReference type="SUPFAM" id="SSF57829">
    <property type="entry name" value="Zn-binding ribosomal proteins"/>
    <property type="match status" value="1"/>
</dbReference>
<feature type="chain" id="PRO_0000460129" description="Large ribosomal subunit protein eL43">
    <location>
        <begin position="1"/>
        <end position="92"/>
    </location>
</feature>
<feature type="zinc finger region" description="C4-type" evidence="13">
    <location>
        <begin position="39"/>
        <end position="60"/>
    </location>
</feature>
<feature type="binding site" evidence="1 14 15">
    <location>
        <position position="39"/>
    </location>
    <ligand>
        <name>Zn(2+)</name>
        <dbReference type="ChEBI" id="CHEBI:29105"/>
    </ligand>
</feature>
<feature type="binding site" evidence="1 14 15">
    <location>
        <position position="42"/>
    </location>
    <ligand>
        <name>Zn(2+)</name>
        <dbReference type="ChEBI" id="CHEBI:29105"/>
    </ligand>
</feature>
<feature type="binding site" evidence="1 14 15">
    <location>
        <position position="57"/>
    </location>
    <ligand>
        <name>Zn(2+)</name>
        <dbReference type="ChEBI" id="CHEBI:29105"/>
    </ligand>
</feature>
<feature type="binding site" evidence="1 14 15">
    <location>
        <position position="60"/>
    </location>
    <ligand>
        <name>Zn(2+)</name>
        <dbReference type="ChEBI" id="CHEBI:29105"/>
    </ligand>
</feature>
<sequence>MAKRTKKVGIVGKYGTRYGASLRKMVKKIEISQHAKYTCSFCGKTKMKRRAVGIWHCGSCMKTVAGGAWTYNTTSAVTVKSAIRRLKELKDQ</sequence>
<evidence type="ECO:0000269" key="1">
    <source>
    </source>
</evidence>
<evidence type="ECO:0000269" key="2">
    <source>
    </source>
</evidence>
<evidence type="ECO:0000269" key="3">
    <source>
    </source>
</evidence>
<evidence type="ECO:0000269" key="4">
    <source>
    </source>
</evidence>
<evidence type="ECO:0000269" key="5">
    <source>
    </source>
</evidence>
<evidence type="ECO:0000269" key="6">
    <source>
    </source>
</evidence>
<evidence type="ECO:0000269" key="7">
    <source>
    </source>
</evidence>
<evidence type="ECO:0000269" key="8">
    <source>
    </source>
</evidence>
<evidence type="ECO:0000269" key="9">
    <source>
    </source>
</evidence>
<evidence type="ECO:0000269" key="10">
    <source>
    </source>
</evidence>
<evidence type="ECO:0000269" key="11">
    <source>
    </source>
</evidence>
<evidence type="ECO:0000269" key="12">
    <source>
    </source>
</evidence>
<evidence type="ECO:0000305" key="13"/>
<evidence type="ECO:0007744" key="14">
    <source>
        <dbReference type="PDB" id="3JAG"/>
    </source>
</evidence>
<evidence type="ECO:0007744" key="15">
    <source>
        <dbReference type="PDB" id="3JAH"/>
    </source>
</evidence>
<evidence type="ECO:0007744" key="16">
    <source>
        <dbReference type="PDB" id="5LZS"/>
    </source>
</evidence>
<evidence type="ECO:0007744" key="17">
    <source>
        <dbReference type="PDB" id="5LZT"/>
    </source>
</evidence>
<evidence type="ECO:0007744" key="18">
    <source>
        <dbReference type="PDB" id="6D90"/>
    </source>
</evidence>
<evidence type="ECO:0007744" key="19">
    <source>
        <dbReference type="PDB" id="6D9J"/>
    </source>
</evidence>
<evidence type="ECO:0007744" key="20">
    <source>
        <dbReference type="PDB" id="6GZ3"/>
    </source>
</evidence>
<evidence type="ECO:0007744" key="21">
    <source>
        <dbReference type="PDB" id="6HCF"/>
    </source>
</evidence>
<evidence type="ECO:0007744" key="22">
    <source>
        <dbReference type="PDB" id="6HCJ"/>
    </source>
</evidence>
<evidence type="ECO:0007744" key="23">
    <source>
        <dbReference type="PDB" id="6MTB"/>
    </source>
</evidence>
<evidence type="ECO:0007744" key="24">
    <source>
        <dbReference type="PDB" id="6MTC"/>
    </source>
</evidence>
<evidence type="ECO:0007744" key="25">
    <source>
        <dbReference type="PDB" id="6P5I"/>
    </source>
</evidence>
<evidence type="ECO:0007744" key="26">
    <source>
        <dbReference type="PDB" id="6P5J"/>
    </source>
</evidence>
<evidence type="ECO:0007744" key="27">
    <source>
        <dbReference type="PDB" id="6R5Q"/>
    </source>
</evidence>
<evidence type="ECO:0007744" key="28">
    <source>
        <dbReference type="PDB" id="6R6G"/>
    </source>
</evidence>
<evidence type="ECO:0007744" key="29">
    <source>
        <dbReference type="PDB" id="6SGC"/>
    </source>
</evidence>
<evidence type="ECO:0007744" key="30">
    <source>
        <dbReference type="PDB" id="6ZVK"/>
    </source>
</evidence>
<evidence type="ECO:0007744" key="31">
    <source>
        <dbReference type="PDB" id="7A01"/>
    </source>
</evidence>
<evidence type="ECO:0007744" key="32">
    <source>
        <dbReference type="PDB" id="7OYD"/>
    </source>
</evidence>
<evidence type="ECO:0007744" key="33">
    <source>
        <dbReference type="PDB" id="7UCJ"/>
    </source>
</evidence>
<evidence type="ECO:0007744" key="34">
    <source>
        <dbReference type="PDB" id="7UCK"/>
    </source>
</evidence>
<accession>G1SY53</accession>
<reference key="1">
    <citation type="journal article" date="2011" name="Nature">
        <title>A high-resolution map of human evolutionary constraint using 29 mammals.</title>
        <authorList>
            <person name="Lindblad-Toh K."/>
            <person name="Garber M."/>
            <person name="Zuk O."/>
            <person name="Lin M.F."/>
            <person name="Parker B.J."/>
            <person name="Washietl S."/>
            <person name="Kheradpour P."/>
            <person name="Ernst J."/>
            <person name="Jordan G."/>
            <person name="Mauceli E."/>
            <person name="Ward L.D."/>
            <person name="Lowe C.B."/>
            <person name="Holloway A.K."/>
            <person name="Clamp M."/>
            <person name="Gnerre S."/>
            <person name="Alfoldi J."/>
            <person name="Beal K."/>
            <person name="Chang J."/>
            <person name="Clawson H."/>
            <person name="Cuff J."/>
            <person name="Di Palma F."/>
            <person name="Fitzgerald S."/>
            <person name="Flicek P."/>
            <person name="Guttman M."/>
            <person name="Hubisz M.J."/>
            <person name="Jaffe D.B."/>
            <person name="Jungreis I."/>
            <person name="Kent W.J."/>
            <person name="Kostka D."/>
            <person name="Lara M."/>
            <person name="Martins A.L."/>
            <person name="Massingham T."/>
            <person name="Moltke I."/>
            <person name="Raney B.J."/>
            <person name="Rasmussen M.D."/>
            <person name="Robinson J."/>
            <person name="Stark A."/>
            <person name="Vilella A.J."/>
            <person name="Wen J."/>
            <person name="Xie X."/>
            <person name="Zody M.C."/>
            <person name="Baldwin J."/>
            <person name="Bloom T."/>
            <person name="Chin C.W."/>
            <person name="Heiman D."/>
            <person name="Nicol R."/>
            <person name="Nusbaum C."/>
            <person name="Young S."/>
            <person name="Wilkinson J."/>
            <person name="Worley K.C."/>
            <person name="Kovar C.L."/>
            <person name="Muzny D.M."/>
            <person name="Gibbs R.A."/>
            <person name="Cree A."/>
            <person name="Dihn H.H."/>
            <person name="Fowler G."/>
            <person name="Jhangiani S."/>
            <person name="Joshi V."/>
            <person name="Lee S."/>
            <person name="Lewis L.R."/>
            <person name="Nazareth L.V."/>
            <person name="Okwuonu G."/>
            <person name="Santibanez J."/>
            <person name="Warren W.C."/>
            <person name="Mardis E.R."/>
            <person name="Weinstock G.M."/>
            <person name="Wilson R.K."/>
            <person name="Delehaunty K."/>
            <person name="Dooling D."/>
            <person name="Fronik C."/>
            <person name="Fulton L."/>
            <person name="Fulton B."/>
            <person name="Graves T."/>
            <person name="Minx P."/>
            <person name="Sodergren E."/>
            <person name="Birney E."/>
            <person name="Margulies E.H."/>
            <person name="Herrero J."/>
            <person name="Green E.D."/>
            <person name="Haussler D."/>
            <person name="Siepel A."/>
            <person name="Goldman N."/>
            <person name="Pollard K.S."/>
            <person name="Pedersen J.S."/>
            <person name="Lander E.S."/>
            <person name="Kellis M."/>
        </authorList>
    </citation>
    <scope>NUCLEOTIDE SEQUENCE [LARGE SCALE GENOMIC DNA]</scope>
    <source>
        <strain>Thorbecke</strain>
    </source>
</reference>
<reference evidence="14 15" key="2">
    <citation type="journal article" date="2015" name="Nature">
        <title>Structural basis for stop codon recognition in eukaryotes.</title>
        <authorList>
            <person name="Brown A."/>
            <person name="Shao S."/>
            <person name="Murray J."/>
            <person name="Hegde R.S."/>
            <person name="Ramakrishnan V."/>
        </authorList>
    </citation>
    <scope>STRUCTURE BY ELECTRON MICROSCOPY (3.45 ANGSTROMS) OF 2-92 OF RIBOSOME IN COMPLEX WITH ZINC</scope>
    <scope>FUNCTION</scope>
    <scope>SUBCELLULAR LOCATION</scope>
    <scope>SUBUNIT</scope>
</reference>
<reference evidence="16 17" key="3">
    <citation type="journal article" date="2016" name="Cell">
        <title>Decoding mammalian ribosome-mRNA states by translational GTPase complexes.</title>
        <authorList>
            <person name="Shao S."/>
            <person name="Murray J."/>
            <person name="Brown A."/>
            <person name="Taunton J."/>
            <person name="Ramakrishnan V."/>
            <person name="Hegde R.S."/>
        </authorList>
    </citation>
    <scope>STRUCTURE BY ELECTRON MICROSCOPY (3.31 ANGSTROMS) OF RIBOSOME</scope>
    <scope>FUNCTION</scope>
    <scope>SUBCELLULAR LOCATION</scope>
    <scope>SUBUNIT</scope>
</reference>
<reference evidence="20" key="4">
    <citation type="journal article" date="2018" name="Cell Rep.">
        <title>tRNA translocation by the eukaryotic 80S ribosome and the impact of GTP hydrolysis.</title>
        <authorList>
            <person name="Flis J."/>
            <person name="Holm M."/>
            <person name="Rundlet E.J."/>
            <person name="Loerke J."/>
            <person name="Hilal T."/>
            <person name="Dabrowski M."/>
            <person name="Burger J."/>
            <person name="Mielke T."/>
            <person name="Blanchard S.C."/>
            <person name="Spahn C.M.T."/>
            <person name="Budkevich T.V."/>
        </authorList>
    </citation>
    <scope>STRUCTURE BY ELECTRON MICROSCOPY (3.60 ANGSTROMS) OF 2-92 OF RIBOSOME</scope>
    <scope>FUNCTION</scope>
    <scope>SUBCELLULAR LOCATION</scope>
    <scope>SUBUNIT</scope>
</reference>
<reference evidence="18 19" key="5">
    <citation type="journal article" date="2018" name="Elife">
        <title>Dual tRNA mimicry in the Cricket paralysis virus IRES uncovers an unexpected similarity with the Hepatitis C Virus IRES.</title>
        <authorList>
            <person name="Pisareva V.P."/>
            <person name="Pisarev A.V."/>
            <person name="Fernandez I.S."/>
        </authorList>
    </citation>
    <scope>STRUCTURE BY ELECTRON MICROSCOPY (3.20 ANGSTROMS) OF RIBOSOME</scope>
    <scope>SUBCELLULAR LOCATION</scope>
    <scope>SUBUNIT</scope>
</reference>
<reference evidence="23 24" key="6">
    <citation type="journal article" date="2018" name="Elife">
        <title>Structures of translationally inactive mammalian ribosomes.</title>
        <authorList>
            <person name="Brown A."/>
            <person name="Baird M.R."/>
            <person name="Yip M.C."/>
            <person name="Murray J."/>
            <person name="Shao S."/>
        </authorList>
    </citation>
    <scope>STRUCTURE BY ELECTRON MICROSCOPY (3.30 ANGSTROMS) OF 2-92 OF RIBOSOME</scope>
    <scope>SUBCELLULAR LOCATION</scope>
    <scope>SUBUNIT</scope>
</reference>
<reference evidence="21 22" key="7">
    <citation type="journal article" date="2018" name="Mol. Cell">
        <title>ZNF598 is a quality control sensor of collided ribosomes.</title>
        <authorList>
            <person name="Juszkiewicz S."/>
            <person name="Chandrasekaran V."/>
            <person name="Lin Z."/>
            <person name="Kraatz S."/>
            <person name="Ramakrishnan V."/>
            <person name="Hegde R.S."/>
        </authorList>
    </citation>
    <scope>STRUCTURE BY ELECTRON MICROSCOPY (3.80 ANGSTROMS) OF RIBOSOME</scope>
    <scope>SUBCELLULAR LOCATION</scope>
    <scope>SUBUNIT</scope>
</reference>
<reference evidence="27 28" key="8">
    <citation type="journal article" date="2019" name="Elife">
        <title>Structural and mutational analysis of the ribosome-arresting human XBP1u.</title>
        <authorList>
            <person name="Shanmuganathan V."/>
            <person name="Schiller N."/>
            <person name="Magoulopoulou A."/>
            <person name="Cheng J."/>
            <person name="Braunger K."/>
            <person name="Cymer F."/>
            <person name="Berninghausen O."/>
            <person name="Beatrix B."/>
            <person name="Kohno K."/>
            <person name="von Heijne G."/>
            <person name="Beckmann R."/>
        </authorList>
    </citation>
    <scope>STRUCTURE BY ELECTRON MICROSCOPY (3.00 ANGSTROMS) OF 2-92 OF RIBOSOME</scope>
    <scope>SUBCELLULAR LOCATION</scope>
    <scope>SUBUNIT</scope>
</reference>
<reference evidence="25 26" key="9">
    <citation type="journal article" date="2019" name="EMBO J.">
        <title>The Israeli acute paralysis virus IRES captures host ribosomes by mimicking a ribosomal state with hybrid tRNAs.</title>
        <authorList>
            <person name="Acosta-Reyes F."/>
            <person name="Neupane R."/>
            <person name="Frank J."/>
            <person name="Fernandez I.S."/>
        </authorList>
    </citation>
    <scope>STRUCTURE BY ELECTRON MICROSCOPY (3.10 ANGSTROMS) OF RIBOSOME</scope>
    <scope>SUBCELLULAR LOCATION</scope>
    <scope>SUBUNIT</scope>
</reference>
<reference evidence="29" key="10">
    <citation type="journal article" date="2019" name="Nat. Struct. Mol. Biol.">
        <title>Mechanism of ribosome stalling during translation of a poly(A) tail.</title>
        <authorList>
            <person name="Chandrasekaran V."/>
            <person name="Juszkiewicz S."/>
            <person name="Choi J."/>
            <person name="Puglisi J.D."/>
            <person name="Brown A."/>
            <person name="Shao S."/>
            <person name="Ramakrishnan V."/>
            <person name="Hegde R.S."/>
        </authorList>
    </citation>
    <scope>STRUCTURE BY ELECTRON MICROSCOPY (2.80 ANGSTROMS) OF RIBOSOME</scope>
    <scope>SUBCELLULAR LOCATION</scope>
    <scope>SUBUNIT</scope>
</reference>
<reference evidence="30 31" key="11">
    <citation type="journal article" date="2020" name="Cell Rep.">
        <title>The Halastavi arva virus intergenic region IRES promotes translation by the simplest possible initiation mechanism.</title>
        <authorList>
            <person name="Abaeva I.S."/>
            <person name="Vicens Q."/>
            <person name="Bochler A."/>
            <person name="Soufari H."/>
            <person name="Simonetti A."/>
            <person name="Pestova T.V."/>
            <person name="Hashem Y."/>
            <person name="Hellen C.U.T."/>
        </authorList>
    </citation>
    <scope>STRUCTURE BY ELECTRON MICROSCOPY (3.49 ANGSTROMS) OF 2-92 OF RIBOSOME</scope>
    <scope>SUBCELLULAR LOCATION</scope>
    <scope>SUBUNIT</scope>
</reference>
<reference evidence="33 34" key="12">
    <citation type="journal article" date="2022" name="Mol. Cell">
        <title>Direct epitranscriptomic regulation of mammalian translation initiation through N4-acetylcytidine.</title>
        <authorList>
            <person name="Arango D."/>
            <person name="Sturgill D."/>
            <person name="Yang R."/>
            <person name="Kanai T."/>
            <person name="Bauer P."/>
            <person name="Roy J."/>
            <person name="Wang Z."/>
            <person name="Hosogane M."/>
            <person name="Schiffers S."/>
            <person name="Oberdoerffer S."/>
        </authorList>
    </citation>
    <scope>STRUCTURE BY ELECTRON MICROSCOPY (2.80 ANGSTROMS) OF 2-92 OF RIBOSOME</scope>
    <scope>SUBCELLULAR LOCATION</scope>
    <scope>SUBUNIT</scope>
</reference>
<reference evidence="32" key="13">
    <citation type="journal article" date="2023" name="Nature">
        <title>A molecular network of conserved factors keeps ribosomes dormant in the egg.</title>
        <authorList>
            <person name="Leesch F."/>
            <person name="Lorenzo-Orts L."/>
            <person name="Pribitzer C."/>
            <person name="Grishkovskaya I."/>
            <person name="Roehsner J."/>
            <person name="Chugunova A."/>
            <person name="Matzinger M."/>
            <person name="Roitinger E."/>
            <person name="Belacic K."/>
            <person name="Kandolf S."/>
            <person name="Lin T.Y."/>
            <person name="Mechtler K."/>
            <person name="Meinhart A."/>
            <person name="Haselbach D."/>
            <person name="Pauli A."/>
        </authorList>
    </citation>
    <scope>STRUCTURE BY ELECTRON MICROSCOPY (2.30 ANGSTROMS) OF RIBOSOME</scope>
    <scope>SUBCELLULAR LOCATION</scope>
    <scope>SUBUNIT</scope>
</reference>
<organism>
    <name type="scientific">Oryctolagus cuniculus</name>
    <name type="common">Rabbit</name>
    <dbReference type="NCBI Taxonomy" id="9986"/>
    <lineage>
        <taxon>Eukaryota</taxon>
        <taxon>Metazoa</taxon>
        <taxon>Chordata</taxon>
        <taxon>Craniata</taxon>
        <taxon>Vertebrata</taxon>
        <taxon>Euteleostomi</taxon>
        <taxon>Mammalia</taxon>
        <taxon>Eutheria</taxon>
        <taxon>Euarchontoglires</taxon>
        <taxon>Glires</taxon>
        <taxon>Lagomorpha</taxon>
        <taxon>Leporidae</taxon>
        <taxon>Oryctolagus</taxon>
    </lineage>
</organism>
<proteinExistence type="evidence at protein level"/>
<gene>
    <name type="primary">RPL37A</name>
</gene>
<comment type="function">
    <text evidence="1 2 6">Component of the large ribosomal subunit (PubMed:26245381, PubMed:27863242, PubMed:30517857). The ribosome is a large ribonucleoprotein complex responsible for the synthesis of proteins in the cell (PubMed:26245381, PubMed:27863242, PubMed:30517857).</text>
</comment>
<comment type="subunit">
    <text evidence="1 2 3 4 5 6 7 8 9 10 11 12">Component of the large ribosomal subunit.</text>
</comment>
<comment type="subcellular location">
    <subcellularLocation>
        <location evidence="1 2 3 4 5 6 7 8 9 10 11 12">Cytoplasm</location>
    </subcellularLocation>
</comment>
<comment type="similarity">
    <text evidence="13">Belongs to the eukaryotic ribosomal protein eL43 family.</text>
</comment>
<protein>
    <recommendedName>
        <fullName>Large ribosomal subunit protein eL43</fullName>
    </recommendedName>
    <alternativeName>
        <fullName>60S ribosomal protein L37a</fullName>
    </alternativeName>
</protein>